<gene>
    <name type="primary">ydiZ</name>
    <name type="ordered locus">b1724</name>
    <name type="ordered locus">JW1713</name>
</gene>
<protein>
    <recommendedName>
        <fullName>Uncharacterized protein YdiZ</fullName>
    </recommendedName>
</protein>
<feature type="chain" id="PRO_0000168998" description="Uncharacterized protein YdiZ">
    <location>
        <begin position="1"/>
        <end position="96"/>
    </location>
</feature>
<sequence>MASGDLVRYVITVMLHEDTLTEINELNNYLTRDGFLLTMTDDEGNIHELGTNTFGLISTQSEEEIRELVSGLTQSATGKDPEITITTWEEWNSNRK</sequence>
<reference key="1">
    <citation type="journal article" date="1997" name="Science">
        <title>The complete genome sequence of Escherichia coli K-12.</title>
        <authorList>
            <person name="Blattner F.R."/>
            <person name="Plunkett G. III"/>
            <person name="Bloch C.A."/>
            <person name="Perna N.T."/>
            <person name="Burland V."/>
            <person name="Riley M."/>
            <person name="Collado-Vides J."/>
            <person name="Glasner J.D."/>
            <person name="Rode C.K."/>
            <person name="Mayhew G.F."/>
            <person name="Gregor J."/>
            <person name="Davis N.W."/>
            <person name="Kirkpatrick H.A."/>
            <person name="Goeden M.A."/>
            <person name="Rose D.J."/>
            <person name="Mau B."/>
            <person name="Shao Y."/>
        </authorList>
    </citation>
    <scope>NUCLEOTIDE SEQUENCE [LARGE SCALE GENOMIC DNA]</scope>
    <source>
        <strain>K12 / MG1655 / ATCC 47076</strain>
    </source>
</reference>
<reference key="2">
    <citation type="journal article" date="2006" name="Mol. Syst. Biol.">
        <title>Highly accurate genome sequences of Escherichia coli K-12 strains MG1655 and W3110.</title>
        <authorList>
            <person name="Hayashi K."/>
            <person name="Morooka N."/>
            <person name="Yamamoto Y."/>
            <person name="Fujita K."/>
            <person name="Isono K."/>
            <person name="Choi S."/>
            <person name="Ohtsubo E."/>
            <person name="Baba T."/>
            <person name="Wanner B.L."/>
            <person name="Mori H."/>
            <person name="Horiuchi T."/>
        </authorList>
    </citation>
    <scope>NUCLEOTIDE SEQUENCE [LARGE SCALE GENOMIC DNA]</scope>
    <source>
        <strain>K12 / W3110 / ATCC 27325 / DSM 5911</strain>
    </source>
</reference>
<dbReference type="EMBL" id="U00096">
    <property type="protein sequence ID" value="AAC74794.1"/>
    <property type="molecule type" value="Genomic_DNA"/>
</dbReference>
<dbReference type="EMBL" id="AP009048">
    <property type="protein sequence ID" value="BAE76509.1"/>
    <property type="molecule type" value="Genomic_DNA"/>
</dbReference>
<dbReference type="PIR" id="D64931">
    <property type="entry name" value="D64931"/>
</dbReference>
<dbReference type="RefSeq" id="NP_416238.1">
    <property type="nucleotide sequence ID" value="NC_000913.3"/>
</dbReference>
<dbReference type="SMR" id="P64479"/>
<dbReference type="BioGRID" id="4263075">
    <property type="interactions" value="75"/>
</dbReference>
<dbReference type="DIP" id="DIP-48166N"/>
<dbReference type="FunCoup" id="P64479">
    <property type="interactions" value="99"/>
</dbReference>
<dbReference type="IntAct" id="P64479">
    <property type="interactions" value="15"/>
</dbReference>
<dbReference type="STRING" id="511145.b1724"/>
<dbReference type="jPOST" id="P64479"/>
<dbReference type="PaxDb" id="511145-b1724"/>
<dbReference type="EnsemblBacteria" id="AAC74794">
    <property type="protein sequence ID" value="AAC74794"/>
    <property type="gene ID" value="b1724"/>
</dbReference>
<dbReference type="GeneID" id="946232"/>
<dbReference type="KEGG" id="ecj:JW1713"/>
<dbReference type="KEGG" id="eco:b1724"/>
<dbReference type="KEGG" id="ecoc:C3026_09860"/>
<dbReference type="PATRIC" id="fig|511145.12.peg.1795"/>
<dbReference type="EchoBASE" id="EB3741"/>
<dbReference type="eggNOG" id="ENOG5032T3T">
    <property type="taxonomic scope" value="Bacteria"/>
</dbReference>
<dbReference type="HOGENOM" id="CLU_166689_0_0_6"/>
<dbReference type="InParanoid" id="P64479"/>
<dbReference type="OMA" id="FRYQEEG"/>
<dbReference type="OrthoDB" id="6490595at2"/>
<dbReference type="PhylomeDB" id="P64479"/>
<dbReference type="BioCyc" id="EcoCyc:G6929-MONOMER"/>
<dbReference type="PRO" id="PR:P64479"/>
<dbReference type="Proteomes" id="UP000000625">
    <property type="component" value="Chromosome"/>
</dbReference>
<dbReference type="GO" id="GO:0004521">
    <property type="term" value="F:RNA endonuclease activity"/>
    <property type="evidence" value="ECO:0007669"/>
    <property type="project" value="InterPro"/>
</dbReference>
<dbReference type="GO" id="GO:0006974">
    <property type="term" value="P:DNA damage response"/>
    <property type="evidence" value="ECO:0000270"/>
    <property type="project" value="EcoliWiki"/>
</dbReference>
<dbReference type="FunFam" id="3.30.70.2360:FF:000001">
    <property type="entry name" value="Endoribonuclease GhoS"/>
    <property type="match status" value="1"/>
</dbReference>
<dbReference type="Gene3D" id="3.30.70.2360">
    <property type="match status" value="1"/>
</dbReference>
<dbReference type="InterPro" id="IPR022597">
    <property type="entry name" value="GhoS"/>
</dbReference>
<dbReference type="InterPro" id="IPR038241">
    <property type="entry name" value="GhoS_sf"/>
</dbReference>
<dbReference type="Pfam" id="PF11080">
    <property type="entry name" value="GhoS"/>
    <property type="match status" value="1"/>
</dbReference>
<accession>P64479</accession>
<accession>P76207</accession>
<accession>Q2MB47</accession>
<organism>
    <name type="scientific">Escherichia coli (strain K12)</name>
    <dbReference type="NCBI Taxonomy" id="83333"/>
    <lineage>
        <taxon>Bacteria</taxon>
        <taxon>Pseudomonadati</taxon>
        <taxon>Pseudomonadota</taxon>
        <taxon>Gammaproteobacteria</taxon>
        <taxon>Enterobacterales</taxon>
        <taxon>Enterobacteriaceae</taxon>
        <taxon>Escherichia</taxon>
    </lineage>
</organism>
<keyword id="KW-1185">Reference proteome</keyword>
<name>YDIZ_ECOLI</name>
<proteinExistence type="predicted"/>